<proteinExistence type="inferred from homology"/>
<reference key="1">
    <citation type="journal article" date="2002" name="DNA Res.">
        <title>Complete genomic sequence of nitrogen-fixing symbiotic bacterium Bradyrhizobium japonicum USDA110.</title>
        <authorList>
            <person name="Kaneko T."/>
            <person name="Nakamura Y."/>
            <person name="Sato S."/>
            <person name="Minamisawa K."/>
            <person name="Uchiumi T."/>
            <person name="Sasamoto S."/>
            <person name="Watanabe A."/>
            <person name="Idesawa K."/>
            <person name="Iriguchi M."/>
            <person name="Kawashima K."/>
            <person name="Kohara M."/>
            <person name="Matsumoto M."/>
            <person name="Shimpo S."/>
            <person name="Tsuruoka H."/>
            <person name="Wada T."/>
            <person name="Yamada M."/>
            <person name="Tabata S."/>
        </authorList>
    </citation>
    <scope>NUCLEOTIDE SEQUENCE [LARGE SCALE GENOMIC DNA]</scope>
    <source>
        <strain>JCM 10833 / BCRC 13528 / IAM 13628 / NBRC 14792 / USDA 110</strain>
    </source>
</reference>
<evidence type="ECO:0000255" key="1">
    <source>
        <dbReference type="HAMAP-Rule" id="MF_00163"/>
    </source>
</evidence>
<keyword id="KW-0378">Hydrolase</keyword>
<keyword id="KW-0408">Iron</keyword>
<keyword id="KW-0479">Metal-binding</keyword>
<keyword id="KW-0648">Protein biosynthesis</keyword>
<keyword id="KW-1185">Reference proteome</keyword>
<accession>Q89BN9</accession>
<name>DEF_BRADU</name>
<sequence>MALREIIILPDKQLRLVSKPIEKVTTEIRKLADDMFETMYDAPGIGLAAIQIAQPLRLITMDLAKRDENGETKPEPRVFINPEVIASSEELSVYEEGCLSIPEYYEEVERPAKVRVRFTDLDGKVHEEDAEGLYATCIQHEIDHLNGVLFVDYLSKLKRDRVLKKFEKAAKRAE</sequence>
<comment type="function">
    <text evidence="1">Removes the formyl group from the N-terminal Met of newly synthesized proteins. Requires at least a dipeptide for an efficient rate of reaction. N-terminal L-methionine is a prerequisite for activity but the enzyme has broad specificity at other positions.</text>
</comment>
<comment type="catalytic activity">
    <reaction evidence="1">
        <text>N-terminal N-formyl-L-methionyl-[peptide] + H2O = N-terminal L-methionyl-[peptide] + formate</text>
        <dbReference type="Rhea" id="RHEA:24420"/>
        <dbReference type="Rhea" id="RHEA-COMP:10639"/>
        <dbReference type="Rhea" id="RHEA-COMP:10640"/>
        <dbReference type="ChEBI" id="CHEBI:15377"/>
        <dbReference type="ChEBI" id="CHEBI:15740"/>
        <dbReference type="ChEBI" id="CHEBI:49298"/>
        <dbReference type="ChEBI" id="CHEBI:64731"/>
        <dbReference type="EC" id="3.5.1.88"/>
    </reaction>
</comment>
<comment type="cofactor">
    <cofactor evidence="1">
        <name>Fe(2+)</name>
        <dbReference type="ChEBI" id="CHEBI:29033"/>
    </cofactor>
    <text evidence="1">Binds 1 Fe(2+) ion.</text>
</comment>
<comment type="similarity">
    <text evidence="1">Belongs to the polypeptide deformylase family.</text>
</comment>
<protein>
    <recommendedName>
        <fullName evidence="1">Peptide deformylase</fullName>
        <shortName evidence="1">PDF</shortName>
        <ecNumber evidence="1">3.5.1.88</ecNumber>
    </recommendedName>
    <alternativeName>
        <fullName evidence="1">Polypeptide deformylase</fullName>
    </alternativeName>
</protein>
<dbReference type="EC" id="3.5.1.88" evidence="1"/>
<dbReference type="EMBL" id="BA000040">
    <property type="protein sequence ID" value="BAC53374.1"/>
    <property type="molecule type" value="Genomic_DNA"/>
</dbReference>
<dbReference type="RefSeq" id="NP_774749.1">
    <property type="nucleotide sequence ID" value="NC_004463.1"/>
</dbReference>
<dbReference type="RefSeq" id="WP_011090831.1">
    <property type="nucleotide sequence ID" value="NC_004463.1"/>
</dbReference>
<dbReference type="SMR" id="Q89BN9"/>
<dbReference type="FunCoup" id="Q89BN9">
    <property type="interactions" value="580"/>
</dbReference>
<dbReference type="STRING" id="224911.AAV28_38240"/>
<dbReference type="EnsemblBacteria" id="BAC53374">
    <property type="protein sequence ID" value="BAC53374"/>
    <property type="gene ID" value="BAC53374"/>
</dbReference>
<dbReference type="GeneID" id="46495020"/>
<dbReference type="KEGG" id="bja:bll8109"/>
<dbReference type="PATRIC" id="fig|224911.44.peg.8279"/>
<dbReference type="eggNOG" id="COG0242">
    <property type="taxonomic scope" value="Bacteria"/>
</dbReference>
<dbReference type="HOGENOM" id="CLU_061901_2_0_5"/>
<dbReference type="InParanoid" id="Q89BN9"/>
<dbReference type="OrthoDB" id="9804313at2"/>
<dbReference type="PhylomeDB" id="Q89BN9"/>
<dbReference type="Proteomes" id="UP000002526">
    <property type="component" value="Chromosome"/>
</dbReference>
<dbReference type="GO" id="GO:0046872">
    <property type="term" value="F:metal ion binding"/>
    <property type="evidence" value="ECO:0007669"/>
    <property type="project" value="UniProtKB-KW"/>
</dbReference>
<dbReference type="GO" id="GO:0042586">
    <property type="term" value="F:peptide deformylase activity"/>
    <property type="evidence" value="ECO:0000318"/>
    <property type="project" value="GO_Central"/>
</dbReference>
<dbReference type="GO" id="GO:0043686">
    <property type="term" value="P:co-translational protein modification"/>
    <property type="evidence" value="ECO:0000318"/>
    <property type="project" value="GO_Central"/>
</dbReference>
<dbReference type="GO" id="GO:0006412">
    <property type="term" value="P:translation"/>
    <property type="evidence" value="ECO:0007669"/>
    <property type="project" value="UniProtKB-UniRule"/>
</dbReference>
<dbReference type="CDD" id="cd00487">
    <property type="entry name" value="Pep_deformylase"/>
    <property type="match status" value="1"/>
</dbReference>
<dbReference type="FunFam" id="3.90.45.10:FF:000001">
    <property type="entry name" value="Peptide deformylase"/>
    <property type="match status" value="1"/>
</dbReference>
<dbReference type="Gene3D" id="3.90.45.10">
    <property type="entry name" value="Peptide deformylase"/>
    <property type="match status" value="1"/>
</dbReference>
<dbReference type="HAMAP" id="MF_00163">
    <property type="entry name" value="Pep_deformylase"/>
    <property type="match status" value="1"/>
</dbReference>
<dbReference type="InterPro" id="IPR023635">
    <property type="entry name" value="Peptide_deformylase"/>
</dbReference>
<dbReference type="InterPro" id="IPR036821">
    <property type="entry name" value="Peptide_deformylase_sf"/>
</dbReference>
<dbReference type="NCBIfam" id="TIGR00079">
    <property type="entry name" value="pept_deformyl"/>
    <property type="match status" value="1"/>
</dbReference>
<dbReference type="NCBIfam" id="NF001159">
    <property type="entry name" value="PRK00150.1-3"/>
    <property type="match status" value="1"/>
</dbReference>
<dbReference type="PANTHER" id="PTHR10458">
    <property type="entry name" value="PEPTIDE DEFORMYLASE"/>
    <property type="match status" value="1"/>
</dbReference>
<dbReference type="PANTHER" id="PTHR10458:SF22">
    <property type="entry name" value="PEPTIDE DEFORMYLASE"/>
    <property type="match status" value="1"/>
</dbReference>
<dbReference type="Pfam" id="PF01327">
    <property type="entry name" value="Pep_deformylase"/>
    <property type="match status" value="1"/>
</dbReference>
<dbReference type="PIRSF" id="PIRSF004749">
    <property type="entry name" value="Pep_def"/>
    <property type="match status" value="1"/>
</dbReference>
<dbReference type="PRINTS" id="PR01576">
    <property type="entry name" value="PDEFORMYLASE"/>
</dbReference>
<dbReference type="SUPFAM" id="SSF56420">
    <property type="entry name" value="Peptide deformylase"/>
    <property type="match status" value="1"/>
</dbReference>
<gene>
    <name evidence="1" type="primary">def</name>
    <name type="ordered locus">bll8109</name>
</gene>
<organism>
    <name type="scientific">Bradyrhizobium diazoefficiens (strain JCM 10833 / BCRC 13528 / IAM 13628 / NBRC 14792 / USDA 110)</name>
    <dbReference type="NCBI Taxonomy" id="224911"/>
    <lineage>
        <taxon>Bacteria</taxon>
        <taxon>Pseudomonadati</taxon>
        <taxon>Pseudomonadota</taxon>
        <taxon>Alphaproteobacteria</taxon>
        <taxon>Hyphomicrobiales</taxon>
        <taxon>Nitrobacteraceae</taxon>
        <taxon>Bradyrhizobium</taxon>
    </lineage>
</organism>
<feature type="chain" id="PRO_0000082751" description="Peptide deformylase">
    <location>
        <begin position="1"/>
        <end position="174"/>
    </location>
</feature>
<feature type="active site" evidence="1">
    <location>
        <position position="141"/>
    </location>
</feature>
<feature type="binding site" evidence="1">
    <location>
        <position position="98"/>
    </location>
    <ligand>
        <name>Fe cation</name>
        <dbReference type="ChEBI" id="CHEBI:24875"/>
    </ligand>
</feature>
<feature type="binding site" evidence="1">
    <location>
        <position position="140"/>
    </location>
    <ligand>
        <name>Fe cation</name>
        <dbReference type="ChEBI" id="CHEBI:24875"/>
    </ligand>
</feature>
<feature type="binding site" evidence="1">
    <location>
        <position position="144"/>
    </location>
    <ligand>
        <name>Fe cation</name>
        <dbReference type="ChEBI" id="CHEBI:24875"/>
    </ligand>
</feature>